<feature type="chain" id="PRO_0000428731" description="Heat shock protein 83">
    <location>
        <begin position="1"/>
        <end position="716"/>
    </location>
</feature>
<feature type="region of interest" description="Disordered" evidence="2">
    <location>
        <begin position="221"/>
        <end position="263"/>
    </location>
</feature>
<feature type="region of interest" description="Disordered" evidence="2">
    <location>
        <begin position="688"/>
        <end position="716"/>
    </location>
</feature>
<feature type="short sequence motif" description="TPR repeat-binding">
    <location>
        <begin position="712"/>
        <end position="716"/>
    </location>
</feature>
<feature type="compositionally biased region" description="Acidic residues" evidence="2">
    <location>
        <begin position="225"/>
        <end position="239"/>
    </location>
</feature>
<feature type="binding site" evidence="1">
    <location>
        <position position="46"/>
    </location>
    <ligand>
        <name>ATP</name>
        <dbReference type="ChEBI" id="CHEBI:30616"/>
    </ligand>
</feature>
<feature type="binding site" evidence="1">
    <location>
        <position position="88"/>
    </location>
    <ligand>
        <name>ATP</name>
        <dbReference type="ChEBI" id="CHEBI:30616"/>
    </ligand>
</feature>
<feature type="binding site" evidence="1">
    <location>
        <position position="107"/>
    </location>
    <ligand>
        <name>ATP</name>
        <dbReference type="ChEBI" id="CHEBI:30616"/>
    </ligand>
</feature>
<feature type="binding site" evidence="1">
    <location>
        <position position="133"/>
    </location>
    <ligand>
        <name>ATP</name>
        <dbReference type="ChEBI" id="CHEBI:30616"/>
    </ligand>
</feature>
<feature type="binding site" evidence="1">
    <location>
        <position position="385"/>
    </location>
    <ligand>
        <name>ATP</name>
        <dbReference type="ChEBI" id="CHEBI:30616"/>
    </ligand>
</feature>
<dbReference type="EMBL" id="AB060275">
    <property type="protein sequence ID" value="BAB41209.1"/>
    <property type="molecule type" value="mRNA"/>
</dbReference>
<dbReference type="EMBL" id="GU324473">
    <property type="protein sequence ID" value="ADG57739.1"/>
    <property type="molecule type" value="Genomic_DNA"/>
</dbReference>
<dbReference type="EMBL" id="HQ437671">
    <property type="status" value="NOT_ANNOTATED_CDS"/>
    <property type="molecule type" value="Genomic_DNA"/>
</dbReference>
<dbReference type="RefSeq" id="NP_001036876.1">
    <property type="nucleotide sequence ID" value="NM_001043411.1"/>
</dbReference>
<dbReference type="SMR" id="Q9BLC5"/>
<dbReference type="FunCoup" id="Q9BLC5">
    <property type="interactions" value="1169"/>
</dbReference>
<dbReference type="STRING" id="7091.Q9BLC5"/>
<dbReference type="PaxDb" id="7091-BGIBMGA004612-TA"/>
<dbReference type="EnsemblMetazoa" id="NM_001043411.1">
    <property type="protein sequence ID" value="NP_001036876.1"/>
    <property type="gene ID" value="GeneID_692420"/>
</dbReference>
<dbReference type="GeneID" id="692420"/>
<dbReference type="KEGG" id="bmor:692420"/>
<dbReference type="CTD" id="38389"/>
<dbReference type="eggNOG" id="KOG0019">
    <property type="taxonomic scope" value="Eukaryota"/>
</dbReference>
<dbReference type="HOGENOM" id="CLU_006684_1_3_1"/>
<dbReference type="InParanoid" id="Q9BLC5"/>
<dbReference type="OMA" id="MRRMKEM"/>
<dbReference type="OrthoDB" id="389945at7088"/>
<dbReference type="Proteomes" id="UP000005204">
    <property type="component" value="Unassembled WGS sequence"/>
</dbReference>
<dbReference type="GO" id="GO:0005737">
    <property type="term" value="C:cytoplasm"/>
    <property type="evidence" value="ECO:0007669"/>
    <property type="project" value="UniProtKB-SubCell"/>
</dbReference>
<dbReference type="GO" id="GO:0005524">
    <property type="term" value="F:ATP binding"/>
    <property type="evidence" value="ECO:0007669"/>
    <property type="project" value="UniProtKB-KW"/>
</dbReference>
<dbReference type="GO" id="GO:0016887">
    <property type="term" value="F:ATP hydrolysis activity"/>
    <property type="evidence" value="ECO:0007669"/>
    <property type="project" value="InterPro"/>
</dbReference>
<dbReference type="GO" id="GO:0140662">
    <property type="term" value="F:ATP-dependent protein folding chaperone"/>
    <property type="evidence" value="ECO:0007669"/>
    <property type="project" value="InterPro"/>
</dbReference>
<dbReference type="GO" id="GO:0051082">
    <property type="term" value="F:unfolded protein binding"/>
    <property type="evidence" value="ECO:0007669"/>
    <property type="project" value="InterPro"/>
</dbReference>
<dbReference type="CDD" id="cd16927">
    <property type="entry name" value="HATPase_Hsp90-like"/>
    <property type="match status" value="1"/>
</dbReference>
<dbReference type="FunFam" id="1.20.120.790:FF:000001">
    <property type="entry name" value="Heat shock protein 90 alpha"/>
    <property type="match status" value="1"/>
</dbReference>
<dbReference type="FunFam" id="3.30.230.80:FF:000001">
    <property type="entry name" value="Heat shock protein 90 alpha"/>
    <property type="match status" value="1"/>
</dbReference>
<dbReference type="FunFam" id="3.40.50.11260:FF:000001">
    <property type="entry name" value="Heat shock protein 90 alpha"/>
    <property type="match status" value="1"/>
</dbReference>
<dbReference type="FunFam" id="3.30.565.10:FF:000001">
    <property type="entry name" value="Heat shock protein HSP 90-alpha"/>
    <property type="match status" value="1"/>
</dbReference>
<dbReference type="Gene3D" id="3.30.230.80">
    <property type="match status" value="1"/>
</dbReference>
<dbReference type="Gene3D" id="3.40.50.11260">
    <property type="match status" value="1"/>
</dbReference>
<dbReference type="Gene3D" id="1.20.120.790">
    <property type="entry name" value="Heat shock protein 90, C-terminal domain"/>
    <property type="match status" value="1"/>
</dbReference>
<dbReference type="Gene3D" id="3.30.565.10">
    <property type="entry name" value="Histidine kinase-like ATPase, C-terminal domain"/>
    <property type="match status" value="1"/>
</dbReference>
<dbReference type="HAMAP" id="MF_00505">
    <property type="entry name" value="HSP90"/>
    <property type="match status" value="1"/>
</dbReference>
<dbReference type="InterPro" id="IPR036890">
    <property type="entry name" value="HATPase_C_sf"/>
</dbReference>
<dbReference type="InterPro" id="IPR019805">
    <property type="entry name" value="Heat_shock_protein_90_CS"/>
</dbReference>
<dbReference type="InterPro" id="IPR037196">
    <property type="entry name" value="HSP90_C"/>
</dbReference>
<dbReference type="InterPro" id="IPR001404">
    <property type="entry name" value="Hsp90_fam"/>
</dbReference>
<dbReference type="InterPro" id="IPR020575">
    <property type="entry name" value="Hsp90_N"/>
</dbReference>
<dbReference type="InterPro" id="IPR020568">
    <property type="entry name" value="Ribosomal_Su5_D2-typ_SF"/>
</dbReference>
<dbReference type="NCBIfam" id="NF003555">
    <property type="entry name" value="PRK05218.1"/>
    <property type="match status" value="1"/>
</dbReference>
<dbReference type="PANTHER" id="PTHR11528">
    <property type="entry name" value="HEAT SHOCK PROTEIN 90 FAMILY MEMBER"/>
    <property type="match status" value="1"/>
</dbReference>
<dbReference type="Pfam" id="PF13589">
    <property type="entry name" value="HATPase_c_3"/>
    <property type="match status" value="1"/>
</dbReference>
<dbReference type="Pfam" id="PF00183">
    <property type="entry name" value="HSP90"/>
    <property type="match status" value="1"/>
</dbReference>
<dbReference type="PIRSF" id="PIRSF002583">
    <property type="entry name" value="Hsp90"/>
    <property type="match status" value="1"/>
</dbReference>
<dbReference type="PRINTS" id="PR00775">
    <property type="entry name" value="HEATSHOCK90"/>
</dbReference>
<dbReference type="SMART" id="SM00387">
    <property type="entry name" value="HATPase_c"/>
    <property type="match status" value="1"/>
</dbReference>
<dbReference type="SUPFAM" id="SSF55874">
    <property type="entry name" value="ATPase domain of HSP90 chaperone/DNA topoisomerase II/histidine kinase"/>
    <property type="match status" value="1"/>
</dbReference>
<dbReference type="SUPFAM" id="SSF110942">
    <property type="entry name" value="HSP90 C-terminal domain"/>
    <property type="match status" value="1"/>
</dbReference>
<dbReference type="SUPFAM" id="SSF54211">
    <property type="entry name" value="Ribosomal protein S5 domain 2-like"/>
    <property type="match status" value="1"/>
</dbReference>
<dbReference type="PROSITE" id="PS00298">
    <property type="entry name" value="HSP90"/>
    <property type="match status" value="1"/>
</dbReference>
<reference key="1">
    <citation type="journal article" date="2001" name="Gene">
        <title>Characterization of the cDNA encoding the 90 kDa heat-shock protein in the Lepidoptera Bombyx mori and Spodoptera frugiperda.</title>
        <authorList>
            <person name="Landais I."/>
            <person name="Pommet J."/>
            <person name="Mita K."/>
            <person name="Nohata J."/>
            <person name="Gimenez S."/>
            <person name="Fournier P."/>
            <person name="Devauchelle G."/>
            <person name="Duonor-Cerutti M."/>
            <person name="Ogliastro M."/>
        </authorList>
    </citation>
    <scope>NUCLEOTIDE SEQUENCE [MRNA]</scope>
    <source>
        <strain>C108</strain>
        <tissue>Wing imaginal disk</tissue>
    </source>
</reference>
<reference key="2">
    <citation type="journal article" date="2008" name="Insect Biochem. Mol. Biol.">
        <title>The genome of a lepidopteran model insect, the silkworm Bombyx mori.</title>
        <authorList>
            <consortium name="International Silkworm Genome Consortium"/>
        </authorList>
    </citation>
    <scope>NUCLEOTIDE SEQUENCE [LARGE SCALE GENOMIC DNA]</scope>
    <source>
        <strain>p50T</strain>
    </source>
</reference>
<reference key="3">
    <citation type="journal article" date="2012" name="Mol. Cell">
        <title>A role for Fkbp6 and the chaperone machinery in piRNA amplification and transposon silencing.</title>
        <authorList>
            <person name="Xiol J."/>
            <person name="Cora E."/>
            <person name="Koglgruber R."/>
            <person name="Chuma S."/>
            <person name="Subramanian S."/>
            <person name="Hosokawa M."/>
            <person name="Reuter M."/>
            <person name="Yang Z."/>
            <person name="Berninger P."/>
            <person name="Palencia A."/>
            <person name="Benes V."/>
            <person name="Penninger J."/>
            <person name="Sachidanandam R."/>
            <person name="Pillai R.S."/>
        </authorList>
    </citation>
    <scope>INTERACTION WITH SHU</scope>
</reference>
<reference key="4">
    <citation type="journal article" date="2013" name="RNA">
        <title>Hsp90 facilitates accurate loading of precursor piRNAs into PIWI proteins.</title>
        <authorList>
            <person name="Izumi N."/>
            <person name="Kawaoka S."/>
            <person name="Yasuhara S."/>
            <person name="Suzuki Y."/>
            <person name="Sugano S."/>
            <person name="Katsuma S."/>
            <person name="Tomari Y."/>
        </authorList>
    </citation>
    <scope>FUNCTION</scope>
</reference>
<gene>
    <name type="primary">Hsp83</name>
    <name type="synonym">Hsp90</name>
</gene>
<comment type="function">
    <text evidence="1 3">Molecular chaperone that promotes the maturation, structural maintenance and proper regulation of specific target proteins involved for instance in cell cycle control and signal transduction. Undergoes a functional cycle that is linked to its ATPase activity. This cycle probably induces conformational changes in the client proteins, thereby causing their activation. Interacts dynamically with various co-chaperones that modulate its substrate recognition, ATPase cycle and chaperone function (By similarity). Required for piRNA biogenesis by facilitating loading of piRNAs into PIWI proteins.</text>
</comment>
<comment type="subunit">
    <text evidence="1">Homodimer.</text>
</comment>
<comment type="subcellular location">
    <subcellularLocation>
        <location evidence="1">Cytoplasm</location>
    </subcellularLocation>
</comment>
<comment type="domain">
    <text evidence="1">The TPR repeat-binding motif mediates interaction with TPR repeat-containing proteins (By similarity). Interacts with shu.</text>
</comment>
<comment type="similarity">
    <text evidence="4">Belongs to the heat shock protein 90 family.</text>
</comment>
<organism>
    <name type="scientific">Bombyx mori</name>
    <name type="common">Silk moth</name>
    <dbReference type="NCBI Taxonomy" id="7091"/>
    <lineage>
        <taxon>Eukaryota</taxon>
        <taxon>Metazoa</taxon>
        <taxon>Ecdysozoa</taxon>
        <taxon>Arthropoda</taxon>
        <taxon>Hexapoda</taxon>
        <taxon>Insecta</taxon>
        <taxon>Pterygota</taxon>
        <taxon>Neoptera</taxon>
        <taxon>Endopterygota</taxon>
        <taxon>Lepidoptera</taxon>
        <taxon>Glossata</taxon>
        <taxon>Ditrysia</taxon>
        <taxon>Bombycoidea</taxon>
        <taxon>Bombycidae</taxon>
        <taxon>Bombycinae</taxon>
        <taxon>Bombyx</taxon>
    </lineage>
</organism>
<protein>
    <recommendedName>
        <fullName>Heat shock protein 83</fullName>
        <shortName>BmHSP90</shortName>
    </recommendedName>
</protein>
<keyword id="KW-0067">ATP-binding</keyword>
<keyword id="KW-0143">Chaperone</keyword>
<keyword id="KW-0963">Cytoplasm</keyword>
<keyword id="KW-0547">Nucleotide-binding</keyword>
<keyword id="KW-0597">Phosphoprotein</keyword>
<keyword id="KW-1185">Reference proteome</keyword>
<keyword id="KW-0346">Stress response</keyword>
<accession>Q9BLC5</accession>
<accession>D6N7U7</accession>
<proteinExistence type="evidence at protein level"/>
<sequence length="716" mass="82422">MPEEMETQPAEVETFAFQAEIAQLMSLIINTFYSNKEIFLRELISNSSDALDKIRYESLTDPSKLDSGKELYIKIIPNKNEGTLTIIDTGIGMTKADLVNNLGTIAKSGTKAFMEALQAGADISMIGQFGVGFYSSYLVADRVTVHSKHNDDEQYVWESSAGGSFTVRPDSGEPLGRGTKIVLHVKEDLAEFMEEHKIKEIVKKHSQFIGYPIKLMVEKEREKELSDDEAEEEKKEEEDEKPKIEDVGEDEDEDKKDTKKKKKTIKEKYTEDEELNKTKPIWTRNADDITQDEYGDFYKSLTNDWEDHLAVKHFSVEGQLEFRALLFVPRRAPFDLFENKKRKNNIKLYVRRVFIMDNCEDLIPEYLNFIRGVVDSEDLPLNISREMLQQNKILKVIRKNLVKKCLELFEELAEDKENYKKYYEQFSKNLKLGIHEDSQNRAKLSELLRYHTSASGDEACSLKEYVSRMKENQKHIYYITGENRDQVANSSFVERVKKRGYEVVYMTEPIDEYVVQQMREYDGKTLVSVTKEGLELPEDEEEKKKREEDKVKFEGLCKVMKNILDNKVEKVVVSNRLVESPCCIVTAQYGWSANMERIMKAQALRDTSTMGYMAAKKHLEINPDHSIVETLRQKAEADKNDKAVKDLVILLYETALLSSGFTLDEPQVHASRIYRMIKLGLGIDEDEPIQVEEPASGDVPPLEGDADDASRMEEVD</sequence>
<evidence type="ECO:0000250" key="1"/>
<evidence type="ECO:0000256" key="2">
    <source>
        <dbReference type="SAM" id="MobiDB-lite"/>
    </source>
</evidence>
<evidence type="ECO:0000269" key="3">
    <source>
    </source>
</evidence>
<evidence type="ECO:0000305" key="4"/>
<name>HSP83_BOMMO</name>